<name>OTCC_LACLA</name>
<sequence length="354" mass="39456">MTSPLITKAEVNSVFQGRSLLAEKDFTPAEINYLVDFGLHLKALKQQNIPHHYLEGKNIALLFAKTSTRTRAAFTTAAIDLGAHPEYLGANDIQLGIKESTEDTARVLGSMFDAIERRGFSQKEVEDLAKYSGVPVWNGLTDDWHPTQMIADFMTVKENFGHLKGLTLVYVGDGRNNMANSLIVTGSMLGVNVHIVAPDSLHPTKEVMDIANKFAEKSGAKPLATSNIEEGVKGANIIYSDVWVSMGESNWEERVKLLTPYRITMDMLKMTGNADNGQLIFMHCLPAFHDTETEYGKEIKEKYGLTEMEVTDEVFRSKYARQFEEAENRMHSIKAIMAATLGNLFIPAVPEDFK</sequence>
<protein>
    <recommendedName>
        <fullName>Ornithine carbamoyltransferase, catabolic</fullName>
        <shortName>OTCase</shortName>
        <ecNumber>2.1.3.3</ecNumber>
    </recommendedName>
</protein>
<gene>
    <name type="primary">arcB</name>
    <name type="ordered locus">LL2036</name>
    <name type="ORF">L0109</name>
</gene>
<accession>P0C2U0</accession>
<accession>Q9CE14</accession>
<accession>Q9KGV4</accession>
<proteinExistence type="inferred from homology"/>
<dbReference type="EC" id="2.1.3.3"/>
<dbReference type="EMBL" id="AE005176">
    <property type="protein sequence ID" value="AAK06134.1"/>
    <property type="molecule type" value="Genomic_DNA"/>
</dbReference>
<dbReference type="PIR" id="D86879">
    <property type="entry name" value="D86879"/>
</dbReference>
<dbReference type="RefSeq" id="NP_268193.1">
    <property type="nucleotide sequence ID" value="NC_002662.1"/>
</dbReference>
<dbReference type="SMR" id="P0C2U0"/>
<dbReference type="PaxDb" id="272623-L0109"/>
<dbReference type="EnsemblBacteria" id="AAK06134">
    <property type="protein sequence ID" value="AAK06134"/>
    <property type="gene ID" value="L0109"/>
</dbReference>
<dbReference type="KEGG" id="lla:L0109"/>
<dbReference type="PATRIC" id="fig|272623.7.peg.2193"/>
<dbReference type="eggNOG" id="COG0078">
    <property type="taxonomic scope" value="Bacteria"/>
</dbReference>
<dbReference type="HOGENOM" id="CLU_043846_3_1_9"/>
<dbReference type="OrthoDB" id="9802587at2"/>
<dbReference type="UniPathway" id="UPA00254">
    <property type="reaction ID" value="UER00365"/>
</dbReference>
<dbReference type="Proteomes" id="UP000002196">
    <property type="component" value="Chromosome"/>
</dbReference>
<dbReference type="GO" id="GO:0005737">
    <property type="term" value="C:cytoplasm"/>
    <property type="evidence" value="ECO:0007669"/>
    <property type="project" value="UniProtKB-SubCell"/>
</dbReference>
<dbReference type="GO" id="GO:0016597">
    <property type="term" value="F:amino acid binding"/>
    <property type="evidence" value="ECO:0007669"/>
    <property type="project" value="InterPro"/>
</dbReference>
<dbReference type="GO" id="GO:0004585">
    <property type="term" value="F:ornithine carbamoyltransferase activity"/>
    <property type="evidence" value="ECO:0007669"/>
    <property type="project" value="UniProtKB-UniRule"/>
</dbReference>
<dbReference type="GO" id="GO:0042450">
    <property type="term" value="P:arginine biosynthetic process via ornithine"/>
    <property type="evidence" value="ECO:0007669"/>
    <property type="project" value="TreeGrafter"/>
</dbReference>
<dbReference type="GO" id="GO:0019547">
    <property type="term" value="P:arginine catabolic process to ornithine"/>
    <property type="evidence" value="ECO:0007669"/>
    <property type="project" value="UniProtKB-UniPathway"/>
</dbReference>
<dbReference type="GO" id="GO:0019240">
    <property type="term" value="P:citrulline biosynthetic process"/>
    <property type="evidence" value="ECO:0007669"/>
    <property type="project" value="TreeGrafter"/>
</dbReference>
<dbReference type="GO" id="GO:0006526">
    <property type="term" value="P:L-arginine biosynthetic process"/>
    <property type="evidence" value="ECO:0007669"/>
    <property type="project" value="UniProtKB-UniRule"/>
</dbReference>
<dbReference type="FunFam" id="3.40.50.1370:FF:000008">
    <property type="entry name" value="Ornithine carbamoyltransferase"/>
    <property type="match status" value="1"/>
</dbReference>
<dbReference type="Gene3D" id="3.40.50.1370">
    <property type="entry name" value="Aspartate/ornithine carbamoyltransferase"/>
    <property type="match status" value="2"/>
</dbReference>
<dbReference type="HAMAP" id="MF_01109">
    <property type="entry name" value="OTCase"/>
    <property type="match status" value="1"/>
</dbReference>
<dbReference type="InterPro" id="IPR006132">
    <property type="entry name" value="Asp/Orn_carbamoyltranf_P-bd"/>
</dbReference>
<dbReference type="InterPro" id="IPR006130">
    <property type="entry name" value="Asp/Orn_carbamoylTrfase"/>
</dbReference>
<dbReference type="InterPro" id="IPR036901">
    <property type="entry name" value="Asp/Orn_carbamoylTrfase_sf"/>
</dbReference>
<dbReference type="InterPro" id="IPR006131">
    <property type="entry name" value="Asp_carbamoyltransf_Asp/Orn-bd"/>
</dbReference>
<dbReference type="InterPro" id="IPR002292">
    <property type="entry name" value="Orn/put_carbamltrans"/>
</dbReference>
<dbReference type="InterPro" id="IPR024904">
    <property type="entry name" value="OTCase_ArgI"/>
</dbReference>
<dbReference type="NCBIfam" id="TIGR00658">
    <property type="entry name" value="orni_carb_tr"/>
    <property type="match status" value="1"/>
</dbReference>
<dbReference type="PANTHER" id="PTHR45753:SF1">
    <property type="entry name" value="ORNITHINE CARBAMOYLTRANSFERASE, CATABOLIC"/>
    <property type="match status" value="1"/>
</dbReference>
<dbReference type="PANTHER" id="PTHR45753">
    <property type="entry name" value="ORNITHINE CARBAMOYLTRANSFERASE, MITOCHONDRIAL"/>
    <property type="match status" value="1"/>
</dbReference>
<dbReference type="Pfam" id="PF00185">
    <property type="entry name" value="OTCace"/>
    <property type="match status" value="1"/>
</dbReference>
<dbReference type="Pfam" id="PF02729">
    <property type="entry name" value="OTCace_N"/>
    <property type="match status" value="1"/>
</dbReference>
<dbReference type="PRINTS" id="PR00100">
    <property type="entry name" value="AOTCASE"/>
</dbReference>
<dbReference type="PRINTS" id="PR00102">
    <property type="entry name" value="OTCASE"/>
</dbReference>
<dbReference type="SUPFAM" id="SSF53671">
    <property type="entry name" value="Aspartate/ornithine carbamoyltransferase"/>
    <property type="match status" value="1"/>
</dbReference>
<dbReference type="PROSITE" id="PS00097">
    <property type="entry name" value="CARBAMOYLTRANSFERASE"/>
    <property type="match status" value="1"/>
</dbReference>
<comment type="function">
    <text evidence="1">Reversibly catalyzes the transfer of the carbamoyl group from carbamoyl phosphate (CP) to the N(epsilon) atom of ornithine (ORN) to produce L-citrulline.</text>
</comment>
<comment type="catalytic activity">
    <reaction>
        <text>carbamoyl phosphate + L-ornithine = L-citrulline + phosphate + H(+)</text>
        <dbReference type="Rhea" id="RHEA:19513"/>
        <dbReference type="ChEBI" id="CHEBI:15378"/>
        <dbReference type="ChEBI" id="CHEBI:43474"/>
        <dbReference type="ChEBI" id="CHEBI:46911"/>
        <dbReference type="ChEBI" id="CHEBI:57743"/>
        <dbReference type="ChEBI" id="CHEBI:58228"/>
        <dbReference type="EC" id="2.1.3.3"/>
    </reaction>
</comment>
<comment type="pathway">
    <text>Amino-acid degradation; L-arginine degradation via ADI pathway; carbamoyl phosphate from L-arginine: step 2/2.</text>
</comment>
<comment type="subcellular location">
    <subcellularLocation>
        <location evidence="1">Cytoplasm</location>
    </subcellularLocation>
</comment>
<comment type="similarity">
    <text evidence="3">Belongs to the aspartate/ornithine carbamoyltransferase superfamily. OTCase family.</text>
</comment>
<evidence type="ECO:0000250" key="1"/>
<evidence type="ECO:0000255" key="2">
    <source>
        <dbReference type="HAMAP-Rule" id="MF_01109"/>
    </source>
</evidence>
<evidence type="ECO:0000305" key="3"/>
<reference key="1">
    <citation type="journal article" date="2001" name="Genome Res.">
        <title>The complete genome sequence of the lactic acid bacterium Lactococcus lactis ssp. lactis IL1403.</title>
        <authorList>
            <person name="Bolotin A."/>
            <person name="Wincker P."/>
            <person name="Mauger S."/>
            <person name="Jaillon O."/>
            <person name="Malarme K."/>
            <person name="Weissenbach J."/>
            <person name="Ehrlich S.D."/>
            <person name="Sorokin A."/>
        </authorList>
    </citation>
    <scope>NUCLEOTIDE SEQUENCE [LARGE SCALE GENOMIC DNA]</scope>
    <source>
        <strain>IL1403</strain>
    </source>
</reference>
<feature type="chain" id="PRO_0000112935" description="Ornithine carbamoyltransferase, catabolic">
    <location>
        <begin position="1"/>
        <end position="354"/>
    </location>
</feature>
<feature type="binding site" evidence="2">
    <location>
        <begin position="67"/>
        <end position="70"/>
    </location>
    <ligand>
        <name>carbamoyl phosphate</name>
        <dbReference type="ChEBI" id="CHEBI:58228"/>
    </ligand>
</feature>
<feature type="binding site" evidence="2">
    <location>
        <position position="94"/>
    </location>
    <ligand>
        <name>carbamoyl phosphate</name>
        <dbReference type="ChEBI" id="CHEBI:58228"/>
    </ligand>
</feature>
<feature type="binding site" evidence="2">
    <location>
        <position position="118"/>
    </location>
    <ligand>
        <name>carbamoyl phosphate</name>
        <dbReference type="ChEBI" id="CHEBI:58228"/>
    </ligand>
</feature>
<feature type="binding site" evidence="2">
    <location>
        <begin position="145"/>
        <end position="148"/>
    </location>
    <ligand>
        <name>carbamoyl phosphate</name>
        <dbReference type="ChEBI" id="CHEBI:58228"/>
    </ligand>
</feature>
<feature type="binding site" evidence="2">
    <location>
        <position position="177"/>
    </location>
    <ligand>
        <name>L-ornithine</name>
        <dbReference type="ChEBI" id="CHEBI:46911"/>
    </ligand>
</feature>
<feature type="binding site" evidence="2">
    <location>
        <position position="241"/>
    </location>
    <ligand>
        <name>L-ornithine</name>
        <dbReference type="ChEBI" id="CHEBI:46911"/>
    </ligand>
</feature>
<feature type="binding site" evidence="2">
    <location>
        <begin position="245"/>
        <end position="246"/>
    </location>
    <ligand>
        <name>L-ornithine</name>
        <dbReference type="ChEBI" id="CHEBI:46911"/>
    </ligand>
</feature>
<feature type="binding site" evidence="2">
    <location>
        <begin position="284"/>
        <end position="285"/>
    </location>
    <ligand>
        <name>carbamoyl phosphate</name>
        <dbReference type="ChEBI" id="CHEBI:58228"/>
    </ligand>
</feature>
<feature type="binding site" evidence="2">
    <location>
        <position position="329"/>
    </location>
    <ligand>
        <name>carbamoyl phosphate</name>
        <dbReference type="ChEBI" id="CHEBI:58228"/>
    </ligand>
</feature>
<feature type="sequence conflict" description="In Ref. 1." evidence="3" ref="1">
    <original>H</original>
    <variation>Y</variation>
    <location>
        <position position="162"/>
    </location>
</feature>
<feature type="sequence conflict" description="In Ref. 1." evidence="3" ref="1">
    <original>T</original>
    <variation>S</variation>
    <location>
        <position position="204"/>
    </location>
</feature>
<feature type="sequence conflict" description="In Ref. 1." evidence="3" ref="1">
    <original>Q</original>
    <variation>K</variation>
    <location>
        <position position="278"/>
    </location>
</feature>
<feature type="sequence conflict" description="In Ref. 1." evidence="3" ref="1">
    <original>E</original>
    <variation>A</variation>
    <location>
        <position position="313"/>
    </location>
</feature>
<keyword id="KW-0056">Arginine metabolism</keyword>
<keyword id="KW-0963">Cytoplasm</keyword>
<keyword id="KW-1185">Reference proteome</keyword>
<keyword id="KW-0808">Transferase</keyword>
<organism>
    <name type="scientific">Lactococcus lactis subsp. lactis (strain IL1403)</name>
    <name type="common">Streptococcus lactis</name>
    <dbReference type="NCBI Taxonomy" id="272623"/>
    <lineage>
        <taxon>Bacteria</taxon>
        <taxon>Bacillati</taxon>
        <taxon>Bacillota</taxon>
        <taxon>Bacilli</taxon>
        <taxon>Lactobacillales</taxon>
        <taxon>Streptococcaceae</taxon>
        <taxon>Lactococcus</taxon>
    </lineage>
</organism>